<name>HYEP_ENTFA</name>
<feature type="chain" id="PRO_0000429653" description="Hydrophobic dipeptide epimerase">
    <location>
        <begin position="1"/>
        <end position="354"/>
    </location>
</feature>
<feature type="binding site">
    <location>
        <position position="134"/>
    </location>
    <ligand>
        <name>substrate</name>
    </ligand>
</feature>
<feature type="binding site">
    <location>
        <begin position="159"/>
        <end position="161"/>
    </location>
    <ligand>
        <name>substrate</name>
    </ligand>
</feature>
<feature type="binding site">
    <location>
        <position position="159"/>
    </location>
    <ligand>
        <name>substrate</name>
    </ligand>
</feature>
<feature type="binding site">
    <location>
        <position position="189"/>
    </location>
    <ligand>
        <name>Mg(2+)</name>
        <dbReference type="ChEBI" id="CHEBI:18420"/>
    </ligand>
</feature>
<feature type="binding site">
    <location>
        <position position="191"/>
    </location>
    <ligand>
        <name>substrate</name>
    </ligand>
</feature>
<feature type="binding site">
    <location>
        <position position="215"/>
    </location>
    <ligand>
        <name>Mg(2+)</name>
        <dbReference type="ChEBI" id="CHEBI:18420"/>
    </ligand>
</feature>
<feature type="binding site">
    <location>
        <position position="240"/>
    </location>
    <ligand>
        <name>Mg(2+)</name>
        <dbReference type="ChEBI" id="CHEBI:18420"/>
    </ligand>
</feature>
<feature type="binding site">
    <location>
        <position position="264"/>
    </location>
    <ligand>
        <name>substrate</name>
    </ligand>
</feature>
<feature type="binding site">
    <location>
        <begin position="292"/>
        <end position="295"/>
    </location>
    <ligand>
        <name>substrate</name>
    </ligand>
</feature>
<feature type="binding site">
    <location>
        <begin position="318"/>
        <end position="320"/>
    </location>
    <ligand>
        <name>substrate</name>
    </ligand>
</feature>
<feature type="strand" evidence="3">
    <location>
        <begin position="3"/>
        <end position="21"/>
    </location>
</feature>
<feature type="strand" evidence="3">
    <location>
        <begin position="24"/>
        <end position="38"/>
    </location>
</feature>
<feature type="strand" evidence="3">
    <location>
        <begin position="43"/>
        <end position="48"/>
    </location>
</feature>
<feature type="turn" evidence="3">
    <location>
        <begin position="52"/>
        <end position="54"/>
    </location>
</feature>
<feature type="helix" evidence="3">
    <location>
        <begin position="59"/>
        <end position="70"/>
    </location>
</feature>
<feature type="turn" evidence="4">
    <location>
        <begin position="73"/>
        <end position="75"/>
    </location>
</feature>
<feature type="helix" evidence="3">
    <location>
        <begin position="81"/>
        <end position="91"/>
    </location>
</feature>
<feature type="helix" evidence="3">
    <location>
        <begin position="96"/>
        <end position="114"/>
    </location>
</feature>
<feature type="helix" evidence="3">
    <location>
        <begin position="118"/>
        <end position="121"/>
    </location>
</feature>
<feature type="strand" evidence="3">
    <location>
        <begin position="127"/>
        <end position="130"/>
    </location>
</feature>
<feature type="strand" evidence="3">
    <location>
        <begin position="133"/>
        <end position="135"/>
    </location>
</feature>
<feature type="helix" evidence="3">
    <location>
        <begin position="140"/>
        <end position="152"/>
    </location>
</feature>
<feature type="strand" evidence="3">
    <location>
        <begin position="156"/>
        <end position="161"/>
    </location>
</feature>
<feature type="helix" evidence="3">
    <location>
        <begin position="166"/>
        <end position="180"/>
    </location>
</feature>
<feature type="strand" evidence="3">
    <location>
        <begin position="184"/>
        <end position="189"/>
    </location>
</feature>
<feature type="helix" evidence="3">
    <location>
        <begin position="196"/>
        <end position="205"/>
    </location>
</feature>
<feature type="turn" evidence="3">
    <location>
        <begin position="206"/>
        <end position="208"/>
    </location>
</feature>
<feature type="strand" evidence="3">
    <location>
        <begin position="211"/>
        <end position="215"/>
    </location>
</feature>
<feature type="helix" evidence="3">
    <location>
        <begin position="223"/>
        <end position="232"/>
    </location>
</feature>
<feature type="strand" evidence="3">
    <location>
        <begin position="234"/>
        <end position="240"/>
    </location>
</feature>
<feature type="helix" evidence="3">
    <location>
        <begin position="246"/>
        <end position="255"/>
    </location>
</feature>
<feature type="strand" evidence="3">
    <location>
        <begin position="259"/>
        <end position="263"/>
    </location>
</feature>
<feature type="helix" evidence="3">
    <location>
        <begin position="265"/>
        <end position="268"/>
    </location>
</feature>
<feature type="helix" evidence="3">
    <location>
        <begin position="271"/>
        <end position="283"/>
    </location>
</feature>
<feature type="strand" evidence="3">
    <location>
        <begin position="287"/>
        <end position="290"/>
    </location>
</feature>
<feature type="helix" evidence="3">
    <location>
        <begin position="298"/>
        <end position="310"/>
    </location>
</feature>
<feature type="strand" evidence="3">
    <location>
        <begin position="314"/>
        <end position="317"/>
    </location>
</feature>
<feature type="helix" evidence="3">
    <location>
        <begin position="321"/>
        <end position="324"/>
    </location>
</feature>
<feature type="strand" evidence="3">
    <location>
        <begin position="325"/>
        <end position="327"/>
    </location>
</feature>
<feature type="strand" evidence="3">
    <location>
        <begin position="329"/>
        <end position="334"/>
    </location>
</feature>
<feature type="strand" evidence="3">
    <location>
        <begin position="340"/>
        <end position="343"/>
    </location>
</feature>
<feature type="strand" evidence="3">
    <location>
        <begin position="346"/>
        <end position="349"/>
    </location>
</feature>
<gene>
    <name type="ordered locus">EF_1511</name>
    <name type="ORF">I574_01909</name>
    <name type="ORF">OO5_01959</name>
</gene>
<sequence length="354" mass="37807">MKIKQVHVRASKIKLKETFTIALGTIESADSAIVEIETEEGLVGYGEGGPGIFITGETLAGTLETIELFGQAIIGLNPFNIEKIHEVMDKISAFAPAAKAAIDIACYDLMGQKAQLPLYQLLGGYDNQVITDITLGIDEPNVMAQKAVEKVKLGFDTLKIKVGTGIEADIARVKAIREAVGFDIKLRLDANQAWTPKDAVKAIQALADYQIELVEQPVKRRDLEGLKYVTSQVNTTIMADESCFDAQDALELVKKGTVDVINIKLMKCGGIHEALKINQICETAGIECMIGCMAEETTIGITAAAHLAAAQKNITRADLDATFGLETAPVTGGVSLEAKPLLELGEAAGLGISH</sequence>
<evidence type="ECO:0000269" key="1">
    <source>
    </source>
</evidence>
<evidence type="ECO:0000305" key="2"/>
<evidence type="ECO:0007829" key="3">
    <source>
        <dbReference type="PDB" id="3JVA"/>
    </source>
</evidence>
<evidence type="ECO:0007829" key="4">
    <source>
        <dbReference type="PDB" id="3JW7"/>
    </source>
</evidence>
<keyword id="KW-0002">3D-structure</keyword>
<keyword id="KW-0413">Isomerase</keyword>
<keyword id="KW-0460">Magnesium</keyword>
<keyword id="KW-0479">Metal-binding</keyword>
<keyword id="KW-1185">Reference proteome</keyword>
<comment type="function">
    <text evidence="1">Catalyzes the epimerization of L-Ile-L-Tyr to L-Ile-D-Tyr (in vitro). Catalyzes the epimerization of dipeptides, with a preference for substrates with a hydrophobic or basic amino acid in the first position, followed by an aromatic residue in the second position. Has epimerase activity with L-Ile-L-Tyr, L-Val-L-Tyr and L-Arg-L-Tyr (in vitro).</text>
</comment>
<comment type="cofactor">
    <cofactor evidence="1">
        <name>Mg(2+)</name>
        <dbReference type="ChEBI" id="CHEBI:18420"/>
    </cofactor>
    <text evidence="1">Binds 1 Mg(2+) ion per subunit.</text>
</comment>
<comment type="biophysicochemical properties">
    <kinetics>
        <KM evidence="1">0.7 mM for L-Val-L-Tyr</KM>
        <KM evidence="1">1.4 mM for L-Arg-L-Tyr</KM>
        <KM evidence="1">0.77 mM for L-Ile-L-Tyr</KM>
        <text>kcat is 9.2 sec(-1) for epimerization of L-Ile-L-Tyr. kcat is 8.7 sec(-1) for epimerization of L-Val-L-Tyr. kcat is 15 sec(-1) for epimerization of L-Arg-L-Tyr.</text>
    </kinetics>
</comment>
<comment type="miscellaneous">
    <text>Part of a large, functionally divergent protein family. Protein modeling and substrate docking was used to predict the substrate specificity, prior to biochemical analysis.</text>
</comment>
<comment type="similarity">
    <text evidence="2">Belongs to the mandelate racemase/muconate lactonizing enzyme family.</text>
</comment>
<accession>Q834W6</accession>
<reference key="1">
    <citation type="journal article" date="2003" name="Science">
        <title>Role of mobile DNA in the evolution of vancomycin-resistant Enterococcus faecalis.</title>
        <authorList>
            <person name="Paulsen I.T."/>
            <person name="Banerjei L."/>
            <person name="Myers G.S.A."/>
            <person name="Nelson K.E."/>
            <person name="Seshadri R."/>
            <person name="Read T.D."/>
            <person name="Fouts D.E."/>
            <person name="Eisen J.A."/>
            <person name="Gill S.R."/>
            <person name="Heidelberg J.F."/>
            <person name="Tettelin H."/>
            <person name="Dodson R.J."/>
            <person name="Umayam L.A."/>
            <person name="Brinkac L.M."/>
            <person name="Beanan M.J."/>
            <person name="Daugherty S.C."/>
            <person name="DeBoy R.T."/>
            <person name="Durkin S.A."/>
            <person name="Kolonay J.F."/>
            <person name="Madupu R."/>
            <person name="Nelson W.C."/>
            <person name="Vamathevan J.J."/>
            <person name="Tran B."/>
            <person name="Upton J."/>
            <person name="Hansen T."/>
            <person name="Shetty J."/>
            <person name="Khouri H.M."/>
            <person name="Utterback T.R."/>
            <person name="Radune D."/>
            <person name="Ketchum K.A."/>
            <person name="Dougherty B.A."/>
            <person name="Fraser C.M."/>
        </authorList>
    </citation>
    <scope>NUCLEOTIDE SEQUENCE [LARGE SCALE GENOMIC DNA]</scope>
    <source>
        <strain>ATCC 700802 / V583</strain>
    </source>
</reference>
<reference key="2">
    <citation type="submission" date="2013-03" db="EMBL/GenBank/DDBJ databases">
        <title>The genome sequence of Enterococcus faecalis V583 (Illumina only assembly).</title>
        <authorList>
            <consortium name="The Broad Institute Genomics Platform"/>
            <consortium name="The Broad Institute Genome Sequencing Center for Infectious Disease"/>
            <person name="Earl A."/>
            <person name="Russ C."/>
            <person name="Gilmore M."/>
            <person name="Surin D."/>
            <person name="Walker B."/>
            <person name="Young S."/>
            <person name="Zeng Q."/>
            <person name="Gargeya S."/>
            <person name="Fitzgerald M."/>
            <person name="Haas B."/>
            <person name="Abouelleil A."/>
            <person name="Allen A.W."/>
            <person name="Alvarado L."/>
            <person name="Arachchi H.M."/>
            <person name="Berlin A.M."/>
            <person name="Chapman S.B."/>
            <person name="Gainer-Dewar J."/>
            <person name="Goldberg J."/>
            <person name="Griggs A."/>
            <person name="Gujja S."/>
            <person name="Hansen M."/>
            <person name="Howarth C."/>
            <person name="Imamovic A."/>
            <person name="Ireland A."/>
            <person name="Larimer J."/>
            <person name="McCowan C."/>
            <person name="Murphy C."/>
            <person name="Pearson M."/>
            <person name="Poon T.W."/>
            <person name="Priest M."/>
            <person name="Roberts A."/>
            <person name="Saif S."/>
            <person name="Shea T."/>
            <person name="Sisk P."/>
            <person name="Sykes S."/>
            <person name="Wortman J."/>
            <person name="Nusbaum C."/>
            <person name="Birren B."/>
        </authorList>
    </citation>
    <scope>NUCLEOTIDE SEQUENCE [LARGE SCALE GENOMIC DNA]</scope>
    <source>
        <strain>ATCC 700802 / V583</strain>
    </source>
</reference>
<reference key="3">
    <citation type="submission" date="2013-03" db="EMBL/GenBank/DDBJ databases">
        <title>The genome sequence of Enterococcus faecalis V583 (PacBio/Illumina hybrid assembly).</title>
        <authorList>
            <consortium name="The Broad Institute Genomics Platform"/>
            <consortium name="The Broad Institute Genome Sequencing Center for Infectious Disease"/>
            <person name="Earl A."/>
            <person name="Russ C."/>
            <person name="Gilmore M."/>
            <person name="Surin D."/>
            <person name="Walker B."/>
            <person name="Young S."/>
            <person name="Zeng Q."/>
            <person name="Gargeya S."/>
            <person name="Fitzgerald M."/>
            <person name="Haas B."/>
            <person name="Abouelleil A."/>
            <person name="Allen A.W."/>
            <person name="Alvarado L."/>
            <person name="Arachchi H.M."/>
            <person name="Berlin A.M."/>
            <person name="Chapman S.B."/>
            <person name="Gainer-Dewar J."/>
            <person name="Goldberg J."/>
            <person name="Griggs A."/>
            <person name="Gujja S."/>
            <person name="Hansen M."/>
            <person name="Howarth C."/>
            <person name="Imamovic A."/>
            <person name="Ireland A."/>
            <person name="Larimer J."/>
            <person name="McCowan C."/>
            <person name="Murphy C."/>
            <person name="Pearson M."/>
            <person name="Poon T.W."/>
            <person name="Priest M."/>
            <person name="Roberts A."/>
            <person name="Saif S."/>
            <person name="Shea T."/>
            <person name="Sisk P."/>
            <person name="Sykes S."/>
            <person name="Wortman J."/>
            <person name="Nusbaum C."/>
            <person name="Birren B."/>
        </authorList>
    </citation>
    <scope>NUCLEOTIDE SEQUENCE [LARGE SCALE GENOMIC DNA]</scope>
    <source>
        <strain>ATCC 700802 / V583</strain>
    </source>
</reference>
<reference key="4">
    <citation type="journal article" date="2012" name="Proc. Natl. Acad. Sci. U.S.A.">
        <title>Homology models guide discovery of diverse enzyme specificities among dipeptide epimerases in the enolase superfamily.</title>
        <authorList>
            <person name="Lukk T."/>
            <person name="Sakai A."/>
            <person name="Kalyanaraman C."/>
            <person name="Brown S.D."/>
            <person name="Imker H.J."/>
            <person name="Song L."/>
            <person name="Fedorov A.A."/>
            <person name="Fedorov E.V."/>
            <person name="Toro R."/>
            <person name="Hillerich B."/>
            <person name="Seidel R."/>
            <person name="Patskovsky Y."/>
            <person name="Vetting M.W."/>
            <person name="Nair S.K."/>
            <person name="Babbitt P.C."/>
            <person name="Almo S.C."/>
            <person name="Gerlt J.A."/>
            <person name="Jacobson M.P."/>
        </authorList>
    </citation>
    <scope>X-RAY CRYSTALLOGRAPHY (1.70 ANGSTROMS) IN COMPLEXES WITH DIPEPTIDE AND MAGNESIUM</scope>
    <scope>FUNCTION</scope>
    <scope>COFACTOR</scope>
    <scope>BIOPHYSICOCHEMICAL PROPERTIES</scope>
    <source>
        <strain>ATCC 700802 / V583</strain>
    </source>
</reference>
<proteinExistence type="evidence at protein level"/>
<dbReference type="EC" id="5.1.1.-"/>
<dbReference type="EMBL" id="AE016830">
    <property type="protein sequence ID" value="AAO81302.1"/>
    <property type="molecule type" value="Genomic_DNA"/>
</dbReference>
<dbReference type="EMBL" id="AHYN01000009">
    <property type="protein sequence ID" value="EOT50195.1"/>
    <property type="molecule type" value="Genomic_DNA"/>
</dbReference>
<dbReference type="EMBL" id="ASWP01000006">
    <property type="protein sequence ID" value="EOT84729.1"/>
    <property type="molecule type" value="Genomic_DNA"/>
</dbReference>
<dbReference type="RefSeq" id="NP_815232.1">
    <property type="nucleotide sequence ID" value="NC_004668.1"/>
</dbReference>
<dbReference type="RefSeq" id="WP_002382304.1">
    <property type="nucleotide sequence ID" value="NZ_KE136528.1"/>
</dbReference>
<dbReference type="PDB" id="3JVA">
    <property type="method" value="X-ray"/>
    <property type="resolution" value="1.70 A"/>
    <property type="chains" value="A/B/C/D/E/F/G/H=1-354"/>
</dbReference>
<dbReference type="PDB" id="3JW7">
    <property type="method" value="X-ray"/>
    <property type="resolution" value="1.80 A"/>
    <property type="chains" value="A/B/C/D/E/F/G/H=1-354"/>
</dbReference>
<dbReference type="PDB" id="3JZU">
    <property type="method" value="X-ray"/>
    <property type="resolution" value="2.00 A"/>
    <property type="chains" value="A/B/C/D/E/F/G/H=1-354"/>
</dbReference>
<dbReference type="PDB" id="3K1G">
    <property type="method" value="X-ray"/>
    <property type="resolution" value="2.00 A"/>
    <property type="chains" value="A/B/C/D/E/F/G/H=1-354"/>
</dbReference>
<dbReference type="PDB" id="3KUM">
    <property type="method" value="X-ray"/>
    <property type="resolution" value="1.90 A"/>
    <property type="chains" value="A/B/C/D/E/F/G/H=1-354"/>
</dbReference>
<dbReference type="PDBsum" id="3JVA"/>
<dbReference type="PDBsum" id="3JW7"/>
<dbReference type="PDBsum" id="3JZU"/>
<dbReference type="PDBsum" id="3K1G"/>
<dbReference type="PDBsum" id="3KUM"/>
<dbReference type="SMR" id="Q834W6"/>
<dbReference type="STRING" id="226185.EF_1511"/>
<dbReference type="EnsemblBacteria" id="AAO81302">
    <property type="protein sequence ID" value="AAO81302"/>
    <property type="gene ID" value="EF_1511"/>
</dbReference>
<dbReference type="KEGG" id="efa:EF1511"/>
<dbReference type="PATRIC" id="fig|226185.45.peg.1989"/>
<dbReference type="eggNOG" id="COG4948">
    <property type="taxonomic scope" value="Bacteria"/>
</dbReference>
<dbReference type="HOGENOM" id="CLU_030273_4_0_9"/>
<dbReference type="EvolutionaryTrace" id="Q834W6"/>
<dbReference type="Proteomes" id="UP000001415">
    <property type="component" value="Chromosome"/>
</dbReference>
<dbReference type="GO" id="GO:0000287">
    <property type="term" value="F:magnesium ion binding"/>
    <property type="evidence" value="ECO:0000314"/>
    <property type="project" value="UniProtKB"/>
</dbReference>
<dbReference type="GO" id="GO:0016854">
    <property type="term" value="F:racemase and epimerase activity"/>
    <property type="evidence" value="ECO:0000314"/>
    <property type="project" value="UniProtKB"/>
</dbReference>
<dbReference type="GO" id="GO:0016855">
    <property type="term" value="F:racemase and epimerase activity, acting on amino acids and derivatives"/>
    <property type="evidence" value="ECO:0007669"/>
    <property type="project" value="InterPro"/>
</dbReference>
<dbReference type="GO" id="GO:0009063">
    <property type="term" value="P:amino acid catabolic process"/>
    <property type="evidence" value="ECO:0007669"/>
    <property type="project" value="InterPro"/>
</dbReference>
<dbReference type="GO" id="GO:0006518">
    <property type="term" value="P:peptide metabolic process"/>
    <property type="evidence" value="ECO:0000314"/>
    <property type="project" value="UniProtKB"/>
</dbReference>
<dbReference type="CDD" id="cd03319">
    <property type="entry name" value="L-Ala-DL-Glu_epimerase"/>
    <property type="match status" value="1"/>
</dbReference>
<dbReference type="FunFam" id="3.30.390.10:FF:000009">
    <property type="entry name" value="Hydrophobic dipeptide epimerase"/>
    <property type="match status" value="1"/>
</dbReference>
<dbReference type="Gene3D" id="3.20.20.120">
    <property type="entry name" value="Enolase-like C-terminal domain"/>
    <property type="match status" value="1"/>
</dbReference>
<dbReference type="Gene3D" id="3.30.390.10">
    <property type="entry name" value="Enolase-like, N-terminal domain"/>
    <property type="match status" value="1"/>
</dbReference>
<dbReference type="InterPro" id="IPR034603">
    <property type="entry name" value="Dipeptide_epimerase"/>
</dbReference>
<dbReference type="InterPro" id="IPR036849">
    <property type="entry name" value="Enolase-like_C_sf"/>
</dbReference>
<dbReference type="InterPro" id="IPR029017">
    <property type="entry name" value="Enolase-like_N"/>
</dbReference>
<dbReference type="InterPro" id="IPR029065">
    <property type="entry name" value="Enolase_C-like"/>
</dbReference>
<dbReference type="InterPro" id="IPR018110">
    <property type="entry name" value="Mandel_Rmase/mucon_lact_enz_CS"/>
</dbReference>
<dbReference type="InterPro" id="IPR013342">
    <property type="entry name" value="Mandelate_racemase_C"/>
</dbReference>
<dbReference type="InterPro" id="IPR013341">
    <property type="entry name" value="Mandelate_racemase_N_dom"/>
</dbReference>
<dbReference type="PANTHER" id="PTHR48073:SF2">
    <property type="entry name" value="O-SUCCINYLBENZOATE SYNTHASE"/>
    <property type="match status" value="1"/>
</dbReference>
<dbReference type="PANTHER" id="PTHR48073">
    <property type="entry name" value="O-SUCCINYLBENZOATE SYNTHASE-RELATED"/>
    <property type="match status" value="1"/>
</dbReference>
<dbReference type="Pfam" id="PF13378">
    <property type="entry name" value="MR_MLE_C"/>
    <property type="match status" value="1"/>
</dbReference>
<dbReference type="Pfam" id="PF02746">
    <property type="entry name" value="MR_MLE_N"/>
    <property type="match status" value="1"/>
</dbReference>
<dbReference type="SFLD" id="SFLDS00001">
    <property type="entry name" value="Enolase"/>
    <property type="match status" value="1"/>
</dbReference>
<dbReference type="SFLD" id="SFLDF00009">
    <property type="entry name" value="o-succinylbenzoate_synthase"/>
    <property type="match status" value="1"/>
</dbReference>
<dbReference type="SMART" id="SM00922">
    <property type="entry name" value="MR_MLE"/>
    <property type="match status" value="1"/>
</dbReference>
<dbReference type="SUPFAM" id="SSF51604">
    <property type="entry name" value="Enolase C-terminal domain-like"/>
    <property type="match status" value="1"/>
</dbReference>
<dbReference type="SUPFAM" id="SSF54826">
    <property type="entry name" value="Enolase N-terminal domain-like"/>
    <property type="match status" value="1"/>
</dbReference>
<dbReference type="PROSITE" id="PS00909">
    <property type="entry name" value="MR_MLE_2"/>
    <property type="match status" value="1"/>
</dbReference>
<protein>
    <recommendedName>
        <fullName>Hydrophobic dipeptide epimerase</fullName>
        <ecNumber>5.1.1.-</ecNumber>
    </recommendedName>
</protein>
<organism>
    <name type="scientific">Enterococcus faecalis (strain ATCC 700802 / V583)</name>
    <dbReference type="NCBI Taxonomy" id="226185"/>
    <lineage>
        <taxon>Bacteria</taxon>
        <taxon>Bacillati</taxon>
        <taxon>Bacillota</taxon>
        <taxon>Bacilli</taxon>
        <taxon>Lactobacillales</taxon>
        <taxon>Enterococcaceae</taxon>
        <taxon>Enterococcus</taxon>
    </lineage>
</organism>